<organism>
    <name type="scientific">Citrobacter koseri (strain ATCC BAA-895 / CDC 4225-83 / SGSC4696)</name>
    <dbReference type="NCBI Taxonomy" id="290338"/>
    <lineage>
        <taxon>Bacteria</taxon>
        <taxon>Pseudomonadati</taxon>
        <taxon>Pseudomonadota</taxon>
        <taxon>Gammaproteobacteria</taxon>
        <taxon>Enterobacterales</taxon>
        <taxon>Enterobacteriaceae</taxon>
        <taxon>Citrobacter</taxon>
    </lineage>
</organism>
<proteinExistence type="inferred from homology"/>
<protein>
    <recommendedName>
        <fullName evidence="1">GTP cyclohydrolase FolE2</fullName>
        <ecNumber evidence="1">3.5.4.16</ecNumber>
    </recommendedName>
</protein>
<keyword id="KW-0378">Hydrolase</keyword>
<keyword id="KW-1185">Reference proteome</keyword>
<accession>A8AF20</accession>
<comment type="function">
    <text evidence="1">Converts GTP to 7,8-dihydroneopterin triphosphate.</text>
</comment>
<comment type="catalytic activity">
    <reaction evidence="1">
        <text>GTP + H2O = 7,8-dihydroneopterin 3'-triphosphate + formate + H(+)</text>
        <dbReference type="Rhea" id="RHEA:17473"/>
        <dbReference type="ChEBI" id="CHEBI:15377"/>
        <dbReference type="ChEBI" id="CHEBI:15378"/>
        <dbReference type="ChEBI" id="CHEBI:15740"/>
        <dbReference type="ChEBI" id="CHEBI:37565"/>
        <dbReference type="ChEBI" id="CHEBI:58462"/>
        <dbReference type="EC" id="3.5.4.16"/>
    </reaction>
</comment>
<comment type="pathway">
    <text evidence="1">Cofactor biosynthesis; 7,8-dihydroneopterin triphosphate biosynthesis; 7,8-dihydroneopterin triphosphate from GTP: step 1/1.</text>
</comment>
<comment type="similarity">
    <text evidence="1">Belongs to the GTP cyclohydrolase IV family.</text>
</comment>
<reference key="1">
    <citation type="submission" date="2007-08" db="EMBL/GenBank/DDBJ databases">
        <authorList>
            <consortium name="The Citrobacter koseri Genome Sequencing Project"/>
            <person name="McClelland M."/>
            <person name="Sanderson E.K."/>
            <person name="Porwollik S."/>
            <person name="Spieth J."/>
            <person name="Clifton W.S."/>
            <person name="Latreille P."/>
            <person name="Courtney L."/>
            <person name="Wang C."/>
            <person name="Pepin K."/>
            <person name="Bhonagiri V."/>
            <person name="Nash W."/>
            <person name="Johnson M."/>
            <person name="Thiruvilangam P."/>
            <person name="Wilson R."/>
        </authorList>
    </citation>
    <scope>NUCLEOTIDE SEQUENCE [LARGE SCALE GENOMIC DNA]</scope>
    <source>
        <strain>ATCC BAA-895 / CDC 4225-83 / SGSC4696</strain>
    </source>
</reference>
<feature type="chain" id="PRO_0000316529" description="GTP cyclohydrolase FolE2">
    <location>
        <begin position="1"/>
        <end position="299"/>
    </location>
</feature>
<feature type="site" description="May be catalytically important" evidence="1">
    <location>
        <position position="147"/>
    </location>
</feature>
<dbReference type="EC" id="3.5.4.16" evidence="1"/>
<dbReference type="EMBL" id="CP000822">
    <property type="protein sequence ID" value="ABV12083.1"/>
    <property type="molecule type" value="Genomic_DNA"/>
</dbReference>
<dbReference type="SMR" id="A8AF20"/>
<dbReference type="STRING" id="290338.CKO_00933"/>
<dbReference type="KEGG" id="cko:CKO_00933"/>
<dbReference type="HOGENOM" id="CLU_062816_0_0_6"/>
<dbReference type="UniPathway" id="UPA00848">
    <property type="reaction ID" value="UER00151"/>
</dbReference>
<dbReference type="Proteomes" id="UP000008148">
    <property type="component" value="Chromosome"/>
</dbReference>
<dbReference type="GO" id="GO:0003934">
    <property type="term" value="F:GTP cyclohydrolase I activity"/>
    <property type="evidence" value="ECO:0007669"/>
    <property type="project" value="UniProtKB-UniRule"/>
</dbReference>
<dbReference type="GO" id="GO:0046654">
    <property type="term" value="P:tetrahydrofolate biosynthetic process"/>
    <property type="evidence" value="ECO:0007669"/>
    <property type="project" value="UniProtKB-UniRule"/>
</dbReference>
<dbReference type="Gene3D" id="3.10.270.10">
    <property type="entry name" value="Urate Oxidase"/>
    <property type="match status" value="1"/>
</dbReference>
<dbReference type="HAMAP" id="MF_01527_B">
    <property type="entry name" value="GTP_cyclohydrol_B"/>
    <property type="match status" value="1"/>
</dbReference>
<dbReference type="InterPro" id="IPR022838">
    <property type="entry name" value="GTP_cyclohydrolase_FolE2"/>
</dbReference>
<dbReference type="InterPro" id="IPR003801">
    <property type="entry name" value="GTP_cyclohydrolase_FolE2/MptA"/>
</dbReference>
<dbReference type="NCBIfam" id="NF010200">
    <property type="entry name" value="PRK13674.1-1"/>
    <property type="match status" value="1"/>
</dbReference>
<dbReference type="PANTHER" id="PTHR36445">
    <property type="entry name" value="GTP CYCLOHYDROLASE MPTA"/>
    <property type="match status" value="1"/>
</dbReference>
<dbReference type="PANTHER" id="PTHR36445:SF1">
    <property type="entry name" value="GTP CYCLOHYDROLASE MPTA"/>
    <property type="match status" value="1"/>
</dbReference>
<dbReference type="Pfam" id="PF02649">
    <property type="entry name" value="GCHY-1"/>
    <property type="match status" value="1"/>
</dbReference>
<evidence type="ECO:0000255" key="1">
    <source>
        <dbReference type="HAMAP-Rule" id="MF_01527"/>
    </source>
</evidence>
<sequence>MLPDIQSTKGDGEGESLSWVGMEQIDLPIDIAGRPVSAKVNAGINLLSSPEAEKGIHMSRLYLLLDELTQGEITPALLQHVLKAFLVSHQGRSDEASIEISGDLLLSRKSLNSNHSGWKAYPLTLSAELRQSFTVTLKVGIPYSSTCPASAALSRHVAGLQFSKDFGNRIDRLPAAEIADWLVEKGMPATPHSQRSWAWVSIRLNPEAKSLPVIELIDYAEVALGTAVQTVVKRSDEQAFAVANGQNLMFCEDAARRLNNVFRCAPFCEAFDIRVEHQESLHPHNAVARIHWKGSKNVT</sequence>
<gene>
    <name evidence="1" type="primary">folE2</name>
    <name type="ordered locus">CKO_00933</name>
</gene>
<name>GCH4_CITK8</name>